<accession>B2VBI8</accession>
<keyword id="KW-0046">Antibiotic resistance</keyword>
<keyword id="KW-0378">Hydrolase</keyword>
<keyword id="KW-0441">Lipid A biosynthesis</keyword>
<keyword id="KW-0444">Lipid biosynthesis</keyword>
<keyword id="KW-0443">Lipid metabolism</keyword>
<keyword id="KW-0448">Lipopolysaccharide biosynthesis</keyword>
<keyword id="KW-1185">Reference proteome</keyword>
<evidence type="ECO:0000255" key="1">
    <source>
        <dbReference type="HAMAP-Rule" id="MF_01870"/>
    </source>
</evidence>
<gene>
    <name evidence="1" type="primary">arnD</name>
    <name type="ordered locus">ETA_23800</name>
</gene>
<comment type="function">
    <text evidence="1">Catalyzes the deformylation of 4-deoxy-4-formamido-L-arabinose-phosphoundecaprenol to 4-amino-4-deoxy-L-arabinose-phosphoundecaprenol. The modified arabinose is attached to lipid A and is required for resistance to polymyxin and cationic antimicrobial peptides.</text>
</comment>
<comment type="catalytic activity">
    <reaction evidence="1">
        <text>4-deoxy-4-formamido-alpha-L-arabinopyranosyl di-trans,octa-cis-undecaprenyl phosphate + H2O = 4-amino-4-deoxy-alpha-L-arabinopyranosyl di-trans,octa-cis-undecaprenyl phosphate + formate</text>
        <dbReference type="Rhea" id="RHEA:27734"/>
        <dbReference type="ChEBI" id="CHEBI:15377"/>
        <dbReference type="ChEBI" id="CHEBI:15740"/>
        <dbReference type="ChEBI" id="CHEBI:58909"/>
        <dbReference type="ChEBI" id="CHEBI:60463"/>
        <dbReference type="EC" id="3.5.1.n3"/>
    </reaction>
</comment>
<comment type="pathway">
    <text evidence="1">Glycolipid biosynthesis; 4-amino-4-deoxy-alpha-L-arabinose undecaprenyl phosphate biosynthesis; 4-amino-4-deoxy-alpha-L-arabinose undecaprenyl phosphate from UDP-4-deoxy-4-formamido-beta-L-arabinose and undecaprenyl phosphate: step 2/2.</text>
</comment>
<comment type="pathway">
    <text evidence="1">Bacterial outer membrane biogenesis; lipopolysaccharide biosynthesis.</text>
</comment>
<comment type="similarity">
    <text evidence="1">Belongs to the polysaccharide deacetylase family. ArnD deformylase subfamily.</text>
</comment>
<sequence>MIDVGLRIDVDTWRGTRDGVPNLLSILQRQQTRGSFFFSVGPDNMGRHLWRLLKPRFLWKMLRSNAASLYGWDILLAGTAWPGRRIGQGQAEVIRATARQHEIGLHAWDHFAWQTWAGVWPAERLSAEIRRGVEALADIVGQPVDCSAVAGWRADGQVVAAKQPFDFTYNSDCRGVRPFRPQLPDGSLGTVQIPVTLPTWDEVIGSSVTREGYNDFILDQITQHQGVPVYTIHAEVEGIVLSEMFERLLVEAGRRGIRFCPLGELLPQDVTQLPVGKIVRGHNPGREGWLGCQQLS</sequence>
<reference key="1">
    <citation type="journal article" date="2008" name="Environ. Microbiol.">
        <title>The genome of Erwinia tasmaniensis strain Et1/99, a non-pathogenic bacterium in the genus Erwinia.</title>
        <authorList>
            <person name="Kube M."/>
            <person name="Migdoll A.M."/>
            <person name="Mueller I."/>
            <person name="Kuhl H."/>
            <person name="Beck A."/>
            <person name="Reinhardt R."/>
            <person name="Geider K."/>
        </authorList>
    </citation>
    <scope>NUCLEOTIDE SEQUENCE [LARGE SCALE GENOMIC DNA]</scope>
    <source>
        <strain>DSM 17950 / CFBP 7177 / CIP 109463 / NCPPB 4357 / Et1/99</strain>
    </source>
</reference>
<organism>
    <name type="scientific">Erwinia tasmaniensis (strain DSM 17950 / CFBP 7177 / CIP 109463 / NCPPB 4357 / Et1/99)</name>
    <dbReference type="NCBI Taxonomy" id="465817"/>
    <lineage>
        <taxon>Bacteria</taxon>
        <taxon>Pseudomonadati</taxon>
        <taxon>Pseudomonadota</taxon>
        <taxon>Gammaproteobacteria</taxon>
        <taxon>Enterobacterales</taxon>
        <taxon>Erwiniaceae</taxon>
        <taxon>Erwinia</taxon>
    </lineage>
</organism>
<name>ARND_ERWT9</name>
<proteinExistence type="inferred from homology"/>
<dbReference type="EC" id="3.5.1.n3" evidence="1"/>
<dbReference type="EMBL" id="CU468135">
    <property type="protein sequence ID" value="CAO97426.1"/>
    <property type="molecule type" value="Genomic_DNA"/>
</dbReference>
<dbReference type="RefSeq" id="WP_012442094.1">
    <property type="nucleotide sequence ID" value="NC_010694.1"/>
</dbReference>
<dbReference type="SMR" id="B2VBI8"/>
<dbReference type="STRING" id="465817.ETA_23800"/>
<dbReference type="KEGG" id="eta:ETA_23800"/>
<dbReference type="eggNOG" id="COG0726">
    <property type="taxonomic scope" value="Bacteria"/>
</dbReference>
<dbReference type="HOGENOM" id="CLU_084199_0_0_6"/>
<dbReference type="OrthoDB" id="5589314at2"/>
<dbReference type="UniPathway" id="UPA00030"/>
<dbReference type="UniPathway" id="UPA00036">
    <property type="reaction ID" value="UER00496"/>
</dbReference>
<dbReference type="Proteomes" id="UP000001726">
    <property type="component" value="Chromosome"/>
</dbReference>
<dbReference type="GO" id="GO:0016020">
    <property type="term" value="C:membrane"/>
    <property type="evidence" value="ECO:0007669"/>
    <property type="project" value="GOC"/>
</dbReference>
<dbReference type="GO" id="GO:0016811">
    <property type="term" value="F:hydrolase activity, acting on carbon-nitrogen (but not peptide) bonds, in linear amides"/>
    <property type="evidence" value="ECO:0007669"/>
    <property type="project" value="UniProtKB-UniRule"/>
</dbReference>
<dbReference type="GO" id="GO:0036108">
    <property type="term" value="P:4-amino-4-deoxy-alpha-L-arabinopyranosyl undecaprenyl phosphate biosynthetic process"/>
    <property type="evidence" value="ECO:0007669"/>
    <property type="project" value="UniProtKB-UniRule"/>
</dbReference>
<dbReference type="GO" id="GO:0009245">
    <property type="term" value="P:lipid A biosynthetic process"/>
    <property type="evidence" value="ECO:0007669"/>
    <property type="project" value="UniProtKB-UniRule"/>
</dbReference>
<dbReference type="GO" id="GO:0009103">
    <property type="term" value="P:lipopolysaccharide biosynthetic process"/>
    <property type="evidence" value="ECO:0007669"/>
    <property type="project" value="UniProtKB-UniRule"/>
</dbReference>
<dbReference type="GO" id="GO:0046677">
    <property type="term" value="P:response to antibiotic"/>
    <property type="evidence" value="ECO:0007669"/>
    <property type="project" value="UniProtKB-KW"/>
</dbReference>
<dbReference type="Gene3D" id="3.20.20.370">
    <property type="entry name" value="Glycoside hydrolase/deacetylase"/>
    <property type="match status" value="1"/>
</dbReference>
<dbReference type="HAMAP" id="MF_01870">
    <property type="entry name" value="ArnD"/>
    <property type="match status" value="1"/>
</dbReference>
<dbReference type="InterPro" id="IPR023557">
    <property type="entry name" value="ArnD"/>
</dbReference>
<dbReference type="InterPro" id="IPR011330">
    <property type="entry name" value="Glyco_hydro/deAcase_b/a-brl"/>
</dbReference>
<dbReference type="InterPro" id="IPR002509">
    <property type="entry name" value="NODB_dom"/>
</dbReference>
<dbReference type="InterPro" id="IPR050248">
    <property type="entry name" value="Polysacc_deacetylase_ArnD"/>
</dbReference>
<dbReference type="NCBIfam" id="NF011923">
    <property type="entry name" value="PRK15394.1"/>
    <property type="match status" value="1"/>
</dbReference>
<dbReference type="PANTHER" id="PTHR10587:SF137">
    <property type="entry name" value="4-DEOXY-4-FORMAMIDO-L-ARABINOSE-PHOSPHOUNDECAPRENOL DEFORMYLASE ARND-RELATED"/>
    <property type="match status" value="1"/>
</dbReference>
<dbReference type="PANTHER" id="PTHR10587">
    <property type="entry name" value="GLYCOSYL TRANSFERASE-RELATED"/>
    <property type="match status" value="1"/>
</dbReference>
<dbReference type="Pfam" id="PF01522">
    <property type="entry name" value="Polysacc_deac_1"/>
    <property type="match status" value="1"/>
</dbReference>
<dbReference type="SUPFAM" id="SSF88713">
    <property type="entry name" value="Glycoside hydrolase/deacetylase"/>
    <property type="match status" value="1"/>
</dbReference>
<dbReference type="PROSITE" id="PS51677">
    <property type="entry name" value="NODB"/>
    <property type="match status" value="1"/>
</dbReference>
<protein>
    <recommendedName>
        <fullName evidence="1">Probable 4-deoxy-4-formamido-L-arabinose-phosphoundecaprenol deformylase ArnD</fullName>
        <ecNumber evidence="1">3.5.1.n3</ecNumber>
    </recommendedName>
</protein>
<feature type="chain" id="PRO_0000383494" description="Probable 4-deoxy-4-formamido-L-arabinose-phosphoundecaprenol deformylase ArnD">
    <location>
        <begin position="1"/>
        <end position="296"/>
    </location>
</feature>
<feature type="domain" description="NodB homology" evidence="1">
    <location>
        <begin position="2"/>
        <end position="260"/>
    </location>
</feature>